<keyword id="KW-1185">Reference proteome</keyword>
<keyword id="KW-0687">Ribonucleoprotein</keyword>
<keyword id="KW-0689">Ribosomal protein</keyword>
<keyword id="KW-0694">RNA-binding</keyword>
<keyword id="KW-0699">rRNA-binding</keyword>
<proteinExistence type="inferred from homology"/>
<evidence type="ECO:0000255" key="1">
    <source>
        <dbReference type="HAMAP-Rule" id="MF_01302"/>
    </source>
</evidence>
<evidence type="ECO:0000305" key="2"/>
<name>RS8_HYPBU</name>
<comment type="function">
    <text evidence="1">One of the primary rRNA binding proteins, it binds directly to 16S rRNA central domain where it helps coordinate assembly of the platform of the 30S subunit.</text>
</comment>
<comment type="subunit">
    <text evidence="1">Part of the 30S ribosomal subunit.</text>
</comment>
<comment type="similarity">
    <text evidence="1">Belongs to the universal ribosomal protein uS8 family.</text>
</comment>
<sequence length="133" mass="15190">MVMLDTLANAMAAIVNAEMRAKPEVIIMPASKLIANVLRVMQREGYIGEFEYIDDGRWGKIRVRLLGRINKAGVIKPRFSVKYKDLIRMPDWLRKYLPSRDIGILIISTSQGVMSHREAIQRRIGGVLLAYVY</sequence>
<reference key="1">
    <citation type="journal article" date="2007" name="Archaea">
        <title>The genome of Hyperthermus butylicus: a sulfur-reducing, peptide fermenting, neutrophilic Crenarchaeote growing up to 108 degrees C.</title>
        <authorList>
            <person name="Bruegger K."/>
            <person name="Chen L."/>
            <person name="Stark M."/>
            <person name="Zibat A."/>
            <person name="Redder P."/>
            <person name="Ruepp A."/>
            <person name="Awayez M."/>
            <person name="She Q."/>
            <person name="Garrett R.A."/>
            <person name="Klenk H.-P."/>
        </authorList>
    </citation>
    <scope>NUCLEOTIDE SEQUENCE [LARGE SCALE GENOMIC DNA]</scope>
    <source>
        <strain>DSM 5456 / JCM 9403 / PLM1-5</strain>
    </source>
</reference>
<gene>
    <name evidence="1" type="primary">rps8</name>
    <name type="ordered locus">Hbut_1315</name>
</gene>
<organism>
    <name type="scientific">Hyperthermus butylicus (strain DSM 5456 / JCM 9403 / PLM1-5)</name>
    <dbReference type="NCBI Taxonomy" id="415426"/>
    <lineage>
        <taxon>Archaea</taxon>
        <taxon>Thermoproteota</taxon>
        <taxon>Thermoprotei</taxon>
        <taxon>Desulfurococcales</taxon>
        <taxon>Pyrodictiaceae</taxon>
        <taxon>Hyperthermus</taxon>
    </lineage>
</organism>
<feature type="chain" id="PRO_0000290966" description="Small ribosomal subunit protein uS8">
    <location>
        <begin position="1"/>
        <end position="133"/>
    </location>
</feature>
<accession>A2BMD4</accession>
<dbReference type="EMBL" id="CP000493">
    <property type="protein sequence ID" value="ABM81145.1"/>
    <property type="molecule type" value="Genomic_DNA"/>
</dbReference>
<dbReference type="RefSeq" id="WP_011822463.1">
    <property type="nucleotide sequence ID" value="NC_008818.1"/>
</dbReference>
<dbReference type="SMR" id="A2BMD4"/>
<dbReference type="STRING" id="415426.Hbut_1315"/>
<dbReference type="EnsemblBacteria" id="ABM81145">
    <property type="protein sequence ID" value="ABM81145"/>
    <property type="gene ID" value="Hbut_1315"/>
</dbReference>
<dbReference type="GeneID" id="4782147"/>
<dbReference type="KEGG" id="hbu:Hbut_1315"/>
<dbReference type="eggNOG" id="arCOG04091">
    <property type="taxonomic scope" value="Archaea"/>
</dbReference>
<dbReference type="HOGENOM" id="CLU_098428_1_1_2"/>
<dbReference type="OrthoDB" id="5670at2157"/>
<dbReference type="Proteomes" id="UP000002593">
    <property type="component" value="Chromosome"/>
</dbReference>
<dbReference type="GO" id="GO:1990904">
    <property type="term" value="C:ribonucleoprotein complex"/>
    <property type="evidence" value="ECO:0007669"/>
    <property type="project" value="UniProtKB-KW"/>
</dbReference>
<dbReference type="GO" id="GO:0005840">
    <property type="term" value="C:ribosome"/>
    <property type="evidence" value="ECO:0007669"/>
    <property type="project" value="UniProtKB-KW"/>
</dbReference>
<dbReference type="GO" id="GO:0019843">
    <property type="term" value="F:rRNA binding"/>
    <property type="evidence" value="ECO:0007669"/>
    <property type="project" value="UniProtKB-UniRule"/>
</dbReference>
<dbReference type="GO" id="GO:0003735">
    <property type="term" value="F:structural constituent of ribosome"/>
    <property type="evidence" value="ECO:0007669"/>
    <property type="project" value="InterPro"/>
</dbReference>
<dbReference type="GO" id="GO:0006412">
    <property type="term" value="P:translation"/>
    <property type="evidence" value="ECO:0007669"/>
    <property type="project" value="UniProtKB-UniRule"/>
</dbReference>
<dbReference type="FunFam" id="3.30.1370.30:FF:000001">
    <property type="entry name" value="40S ribosomal protein S15a"/>
    <property type="match status" value="1"/>
</dbReference>
<dbReference type="Gene3D" id="3.30.1370.30">
    <property type="match status" value="1"/>
</dbReference>
<dbReference type="Gene3D" id="3.30.1490.10">
    <property type="match status" value="1"/>
</dbReference>
<dbReference type="HAMAP" id="MF_01302_A">
    <property type="entry name" value="Ribosomal_uS8_A"/>
    <property type="match status" value="1"/>
</dbReference>
<dbReference type="InterPro" id="IPR000630">
    <property type="entry name" value="Ribosomal_uS8"/>
</dbReference>
<dbReference type="InterPro" id="IPR047863">
    <property type="entry name" value="Ribosomal_uS8_CS"/>
</dbReference>
<dbReference type="InterPro" id="IPR035987">
    <property type="entry name" value="Ribosomal_uS8_sf"/>
</dbReference>
<dbReference type="NCBIfam" id="NF003115">
    <property type="entry name" value="PRK04034.1"/>
    <property type="match status" value="1"/>
</dbReference>
<dbReference type="PANTHER" id="PTHR11758">
    <property type="entry name" value="40S RIBOSOMAL PROTEIN S15A"/>
    <property type="match status" value="1"/>
</dbReference>
<dbReference type="Pfam" id="PF00410">
    <property type="entry name" value="Ribosomal_S8"/>
    <property type="match status" value="1"/>
</dbReference>
<dbReference type="SUPFAM" id="SSF56047">
    <property type="entry name" value="Ribosomal protein S8"/>
    <property type="match status" value="1"/>
</dbReference>
<dbReference type="PROSITE" id="PS00053">
    <property type="entry name" value="RIBOSOMAL_S8"/>
    <property type="match status" value="1"/>
</dbReference>
<protein>
    <recommendedName>
        <fullName evidence="1">Small ribosomal subunit protein uS8</fullName>
    </recommendedName>
    <alternativeName>
        <fullName evidence="2">30S ribosomal protein S8</fullName>
    </alternativeName>
</protein>